<name>Y1688_SHOC1</name>
<keyword id="KW-1185">Reference proteome</keyword>
<sequence>MVIPSNTTVYVDADSCPVKEEVISLARTFGKKMVFVYSYAHTMSLPKDVETAIVDTSKEAADLYLLQSVNRGDVCVTQDHALASLLLVKGVIVLSPRGHVYKEEEMPAMLAWRHTSQKARRAGKKTRGPKKFTASDRAAFYHALYAVLEKIAKE</sequence>
<evidence type="ECO:0000255" key="1">
    <source>
        <dbReference type="HAMAP-Rule" id="MF_00489"/>
    </source>
</evidence>
<organism>
    <name type="scientific">Shouchella clausii (strain KSM-K16)</name>
    <name type="common">Alkalihalobacillus clausii</name>
    <dbReference type="NCBI Taxonomy" id="66692"/>
    <lineage>
        <taxon>Bacteria</taxon>
        <taxon>Bacillati</taxon>
        <taxon>Bacillota</taxon>
        <taxon>Bacilli</taxon>
        <taxon>Bacillales</taxon>
        <taxon>Bacillaceae</taxon>
        <taxon>Shouchella</taxon>
    </lineage>
</organism>
<proteinExistence type="inferred from homology"/>
<feature type="chain" id="PRO_0000175958" description="UPF0178 protein ABC1688">
    <location>
        <begin position="1"/>
        <end position="154"/>
    </location>
</feature>
<accession>Q5WHD2</accession>
<comment type="similarity">
    <text evidence="1">Belongs to the UPF0178 family.</text>
</comment>
<reference key="1">
    <citation type="submission" date="2003-10" db="EMBL/GenBank/DDBJ databases">
        <title>The complete genome sequence of the alkaliphilic Bacillus clausii KSM-K16.</title>
        <authorList>
            <person name="Takaki Y."/>
            <person name="Kageyama Y."/>
            <person name="Shimamura S."/>
            <person name="Suzuki H."/>
            <person name="Nishi S."/>
            <person name="Hatada Y."/>
            <person name="Kawai S."/>
            <person name="Ito S."/>
            <person name="Horikoshi K."/>
        </authorList>
    </citation>
    <scope>NUCLEOTIDE SEQUENCE [LARGE SCALE GENOMIC DNA]</scope>
    <source>
        <strain>KSM-K16</strain>
    </source>
</reference>
<gene>
    <name type="ordered locus">ABC1688</name>
</gene>
<protein>
    <recommendedName>
        <fullName evidence="1">UPF0178 protein ABC1688</fullName>
    </recommendedName>
</protein>
<dbReference type="EMBL" id="AP006627">
    <property type="protein sequence ID" value="BAD64223.1"/>
    <property type="molecule type" value="Genomic_DNA"/>
</dbReference>
<dbReference type="RefSeq" id="WP_011246532.1">
    <property type="nucleotide sequence ID" value="NC_006582.1"/>
</dbReference>
<dbReference type="STRING" id="66692.ABC1688"/>
<dbReference type="KEGG" id="bcl:ABC1688"/>
<dbReference type="eggNOG" id="COG1671">
    <property type="taxonomic scope" value="Bacteria"/>
</dbReference>
<dbReference type="HOGENOM" id="CLU_106619_0_0_9"/>
<dbReference type="OrthoDB" id="9798918at2"/>
<dbReference type="Proteomes" id="UP000001168">
    <property type="component" value="Chromosome"/>
</dbReference>
<dbReference type="HAMAP" id="MF_00489">
    <property type="entry name" value="UPF0178"/>
    <property type="match status" value="1"/>
</dbReference>
<dbReference type="InterPro" id="IPR003791">
    <property type="entry name" value="UPF0178"/>
</dbReference>
<dbReference type="PANTHER" id="PTHR35146">
    <property type="entry name" value="UPF0178 PROTEIN YAII"/>
    <property type="match status" value="1"/>
</dbReference>
<dbReference type="PANTHER" id="PTHR35146:SF1">
    <property type="entry name" value="UPF0178 PROTEIN YAII"/>
    <property type="match status" value="1"/>
</dbReference>
<dbReference type="Pfam" id="PF02639">
    <property type="entry name" value="DUF188"/>
    <property type="match status" value="1"/>
</dbReference>